<protein>
    <recommendedName>
        <fullName evidence="1">ATP-dependent dethiobiotin synthetase BioD</fullName>
        <ecNumber evidence="1">6.3.3.3</ecNumber>
    </recommendedName>
    <alternativeName>
        <fullName evidence="1">DTB synthetase</fullName>
        <shortName evidence="1">DTBS</shortName>
    </alternativeName>
    <alternativeName>
        <fullName evidence="1">Dethiobiotin synthase</fullName>
    </alternativeName>
</protein>
<evidence type="ECO:0000255" key="1">
    <source>
        <dbReference type="HAMAP-Rule" id="MF_00336"/>
    </source>
</evidence>
<reference key="1">
    <citation type="submission" date="2006-03" db="EMBL/GenBank/DDBJ databases">
        <title>Complete sequence of chromosome of Nitrobacter hamburgensis X14.</title>
        <authorList>
            <consortium name="US DOE Joint Genome Institute"/>
            <person name="Copeland A."/>
            <person name="Lucas S."/>
            <person name="Lapidus A."/>
            <person name="Barry K."/>
            <person name="Detter J.C."/>
            <person name="Glavina del Rio T."/>
            <person name="Hammon N."/>
            <person name="Israni S."/>
            <person name="Dalin E."/>
            <person name="Tice H."/>
            <person name="Pitluck S."/>
            <person name="Chain P."/>
            <person name="Malfatti S."/>
            <person name="Shin M."/>
            <person name="Vergez L."/>
            <person name="Schmutz J."/>
            <person name="Larimer F."/>
            <person name="Land M."/>
            <person name="Hauser L."/>
            <person name="Kyrpides N."/>
            <person name="Ivanova N."/>
            <person name="Ward B."/>
            <person name="Arp D."/>
            <person name="Klotz M."/>
            <person name="Stein L."/>
            <person name="O'Mullan G."/>
            <person name="Starkenburg S."/>
            <person name="Sayavedra L."/>
            <person name="Poret-Peterson A.T."/>
            <person name="Gentry M.E."/>
            <person name="Bruce D."/>
            <person name="Richardson P."/>
        </authorList>
    </citation>
    <scope>NUCLEOTIDE SEQUENCE [LARGE SCALE GENOMIC DNA]</scope>
    <source>
        <strain>DSM 10229 / NCIMB 13809 / X14</strain>
    </source>
</reference>
<keyword id="KW-0067">ATP-binding</keyword>
<keyword id="KW-0093">Biotin biosynthesis</keyword>
<keyword id="KW-0963">Cytoplasm</keyword>
<keyword id="KW-0436">Ligase</keyword>
<keyword id="KW-0460">Magnesium</keyword>
<keyword id="KW-0479">Metal-binding</keyword>
<keyword id="KW-0547">Nucleotide-binding</keyword>
<keyword id="KW-1185">Reference proteome</keyword>
<sequence>MSTRIVVTGTDTGIGKTVFSAALAGALDGFYWKPIQAGLDDETDTQTVLRLSGLAAERVLPEAYRLRTPASPHLAAELDGVTIEHQALLVPEKDRPLVVEGAGGLLVPLTRTITYLDLMARWRIPVVLCARTALGTINHSLLSVEALRARGVAMLGIAFIGEENVESERIITEMGKVRRLGRLPHVAPLTRDTLREAFADGFAIDDFLKGPA</sequence>
<comment type="function">
    <text evidence="1">Catalyzes a mechanistically unusual reaction, the ATP-dependent insertion of CO2 between the N7 and N8 nitrogen atoms of 7,8-diaminopelargonic acid (DAPA, also called 7,8-diammoniononanoate) to form a ureido ring.</text>
</comment>
<comment type="catalytic activity">
    <reaction evidence="1">
        <text>(7R,8S)-7,8-diammoniononanoate + CO2 + ATP = (4R,5S)-dethiobiotin + ADP + phosphate + 3 H(+)</text>
        <dbReference type="Rhea" id="RHEA:15805"/>
        <dbReference type="ChEBI" id="CHEBI:15378"/>
        <dbReference type="ChEBI" id="CHEBI:16526"/>
        <dbReference type="ChEBI" id="CHEBI:30616"/>
        <dbReference type="ChEBI" id="CHEBI:43474"/>
        <dbReference type="ChEBI" id="CHEBI:149469"/>
        <dbReference type="ChEBI" id="CHEBI:149473"/>
        <dbReference type="ChEBI" id="CHEBI:456216"/>
        <dbReference type="EC" id="6.3.3.3"/>
    </reaction>
</comment>
<comment type="cofactor">
    <cofactor evidence="1">
        <name>Mg(2+)</name>
        <dbReference type="ChEBI" id="CHEBI:18420"/>
    </cofactor>
</comment>
<comment type="pathway">
    <text evidence="1">Cofactor biosynthesis; biotin biosynthesis; biotin from 7,8-diaminononanoate: step 1/2.</text>
</comment>
<comment type="subunit">
    <text evidence="1">Homodimer.</text>
</comment>
<comment type="subcellular location">
    <subcellularLocation>
        <location evidence="1">Cytoplasm</location>
    </subcellularLocation>
</comment>
<comment type="similarity">
    <text evidence="1">Belongs to the dethiobiotin synthetase family.</text>
</comment>
<accession>Q1QJL1</accession>
<proteinExistence type="inferred from homology"/>
<name>BIOD_NITHX</name>
<gene>
    <name evidence="1" type="primary">bioD</name>
    <name type="ordered locus">Nham_2815</name>
</gene>
<organism>
    <name type="scientific">Nitrobacter hamburgensis (strain DSM 10229 / NCIMB 13809 / X14)</name>
    <dbReference type="NCBI Taxonomy" id="323097"/>
    <lineage>
        <taxon>Bacteria</taxon>
        <taxon>Pseudomonadati</taxon>
        <taxon>Pseudomonadota</taxon>
        <taxon>Alphaproteobacteria</taxon>
        <taxon>Hyphomicrobiales</taxon>
        <taxon>Nitrobacteraceae</taxon>
        <taxon>Nitrobacter</taxon>
    </lineage>
</organism>
<dbReference type="EC" id="6.3.3.3" evidence="1"/>
<dbReference type="EMBL" id="CP000319">
    <property type="protein sequence ID" value="ABE63586.1"/>
    <property type="molecule type" value="Genomic_DNA"/>
</dbReference>
<dbReference type="RefSeq" id="WP_011511252.1">
    <property type="nucleotide sequence ID" value="NC_007964.1"/>
</dbReference>
<dbReference type="SMR" id="Q1QJL1"/>
<dbReference type="STRING" id="323097.Nham_2815"/>
<dbReference type="KEGG" id="nha:Nham_2815"/>
<dbReference type="eggNOG" id="COG0132">
    <property type="taxonomic scope" value="Bacteria"/>
</dbReference>
<dbReference type="HOGENOM" id="CLU_072551_2_0_5"/>
<dbReference type="OrthoDB" id="9802097at2"/>
<dbReference type="UniPathway" id="UPA00078">
    <property type="reaction ID" value="UER00161"/>
</dbReference>
<dbReference type="Proteomes" id="UP000001953">
    <property type="component" value="Chromosome"/>
</dbReference>
<dbReference type="GO" id="GO:0005829">
    <property type="term" value="C:cytosol"/>
    <property type="evidence" value="ECO:0007669"/>
    <property type="project" value="TreeGrafter"/>
</dbReference>
<dbReference type="GO" id="GO:0005524">
    <property type="term" value="F:ATP binding"/>
    <property type="evidence" value="ECO:0007669"/>
    <property type="project" value="UniProtKB-UniRule"/>
</dbReference>
<dbReference type="GO" id="GO:0004141">
    <property type="term" value="F:dethiobiotin synthase activity"/>
    <property type="evidence" value="ECO:0007669"/>
    <property type="project" value="UniProtKB-UniRule"/>
</dbReference>
<dbReference type="GO" id="GO:0000287">
    <property type="term" value="F:magnesium ion binding"/>
    <property type="evidence" value="ECO:0007669"/>
    <property type="project" value="UniProtKB-UniRule"/>
</dbReference>
<dbReference type="GO" id="GO:0009102">
    <property type="term" value="P:biotin biosynthetic process"/>
    <property type="evidence" value="ECO:0007669"/>
    <property type="project" value="UniProtKB-UniRule"/>
</dbReference>
<dbReference type="CDD" id="cd03109">
    <property type="entry name" value="DTBS"/>
    <property type="match status" value="1"/>
</dbReference>
<dbReference type="Gene3D" id="3.40.50.300">
    <property type="entry name" value="P-loop containing nucleotide triphosphate hydrolases"/>
    <property type="match status" value="1"/>
</dbReference>
<dbReference type="HAMAP" id="MF_00336">
    <property type="entry name" value="BioD"/>
    <property type="match status" value="1"/>
</dbReference>
<dbReference type="InterPro" id="IPR004472">
    <property type="entry name" value="DTB_synth_BioD"/>
</dbReference>
<dbReference type="InterPro" id="IPR027417">
    <property type="entry name" value="P-loop_NTPase"/>
</dbReference>
<dbReference type="NCBIfam" id="TIGR00347">
    <property type="entry name" value="bioD"/>
    <property type="match status" value="1"/>
</dbReference>
<dbReference type="PANTHER" id="PTHR43210:SF2">
    <property type="entry name" value="ATP-DEPENDENT DETHIOBIOTIN SYNTHETASE BIOD 2"/>
    <property type="match status" value="1"/>
</dbReference>
<dbReference type="PANTHER" id="PTHR43210">
    <property type="entry name" value="DETHIOBIOTIN SYNTHETASE"/>
    <property type="match status" value="1"/>
</dbReference>
<dbReference type="Pfam" id="PF13500">
    <property type="entry name" value="AAA_26"/>
    <property type="match status" value="1"/>
</dbReference>
<dbReference type="PIRSF" id="PIRSF006755">
    <property type="entry name" value="DTB_synth"/>
    <property type="match status" value="1"/>
</dbReference>
<dbReference type="SUPFAM" id="SSF52540">
    <property type="entry name" value="P-loop containing nucleoside triphosphate hydrolases"/>
    <property type="match status" value="1"/>
</dbReference>
<feature type="chain" id="PRO_0000302535" description="ATP-dependent dethiobiotin synthetase BioD">
    <location>
        <begin position="1"/>
        <end position="212"/>
    </location>
</feature>
<feature type="active site" evidence="1">
    <location>
        <position position="33"/>
    </location>
</feature>
<feature type="binding site" evidence="1">
    <location>
        <begin position="13"/>
        <end position="18"/>
    </location>
    <ligand>
        <name>ATP</name>
        <dbReference type="ChEBI" id="CHEBI:30616"/>
    </ligand>
</feature>
<feature type="binding site" evidence="1">
    <location>
        <position position="17"/>
    </location>
    <ligand>
        <name>Mg(2+)</name>
        <dbReference type="ChEBI" id="CHEBI:18420"/>
    </ligand>
</feature>
<feature type="binding site" evidence="1">
    <location>
        <begin position="100"/>
        <end position="103"/>
    </location>
    <ligand>
        <name>ATP</name>
        <dbReference type="ChEBI" id="CHEBI:30616"/>
    </ligand>
</feature>
<feature type="binding site" evidence="1">
    <location>
        <position position="100"/>
    </location>
    <ligand>
        <name>Mg(2+)</name>
        <dbReference type="ChEBI" id="CHEBI:18420"/>
    </ligand>
</feature>
<feature type="binding site" evidence="1">
    <location>
        <begin position="184"/>
        <end position="186"/>
    </location>
    <ligand>
        <name>ATP</name>
        <dbReference type="ChEBI" id="CHEBI:30616"/>
    </ligand>
</feature>